<organism>
    <name type="scientific">Salmonella schwarzengrund (strain CVM19633)</name>
    <dbReference type="NCBI Taxonomy" id="439843"/>
    <lineage>
        <taxon>Bacteria</taxon>
        <taxon>Pseudomonadati</taxon>
        <taxon>Pseudomonadota</taxon>
        <taxon>Gammaproteobacteria</taxon>
        <taxon>Enterobacterales</taxon>
        <taxon>Enterobacteriaceae</taxon>
        <taxon>Salmonella</taxon>
    </lineage>
</organism>
<feature type="chain" id="PRO_1000096608" description="Uracil-DNA glycosylase">
    <location>
        <begin position="1"/>
        <end position="229"/>
    </location>
</feature>
<feature type="active site" description="Proton acceptor" evidence="1">
    <location>
        <position position="64"/>
    </location>
</feature>
<sequence length="229" mass="25480">MATELTWHDVLADEKQQPYFINTLHTVAGERQSGITVYPPQKDVFNAFRFTELGDVKVVILGQDPYHGPGQAHGLAFSVRPGIAPPPSLVNMYKELEASIPGFVRPAHGYLESWARQGVLLLNTVLTVRAGQAHSHASLGWETFTDKVISLINQHREGVVFLLWGSHAQKKGAIIDPQRHHILKAPHPSPLSAHRGFFGCNHFALTNQWLEQHGEKTIDWTPVLPAESE</sequence>
<proteinExistence type="inferred from homology"/>
<evidence type="ECO:0000255" key="1">
    <source>
        <dbReference type="HAMAP-Rule" id="MF_00148"/>
    </source>
</evidence>
<gene>
    <name evidence="1" type="primary">ung</name>
    <name type="ordered locus">SeSA_A2841</name>
</gene>
<name>UNG_SALSV</name>
<dbReference type="EC" id="3.2.2.27" evidence="1"/>
<dbReference type="EMBL" id="CP001127">
    <property type="protein sequence ID" value="ACF92978.1"/>
    <property type="molecule type" value="Genomic_DNA"/>
</dbReference>
<dbReference type="RefSeq" id="WP_000179978.1">
    <property type="nucleotide sequence ID" value="NC_011094.1"/>
</dbReference>
<dbReference type="SMR" id="B4TS29"/>
<dbReference type="KEGG" id="sew:SeSA_A2841"/>
<dbReference type="HOGENOM" id="CLU_032162_3_0_6"/>
<dbReference type="Proteomes" id="UP000001865">
    <property type="component" value="Chromosome"/>
</dbReference>
<dbReference type="GO" id="GO:0005737">
    <property type="term" value="C:cytoplasm"/>
    <property type="evidence" value="ECO:0007669"/>
    <property type="project" value="UniProtKB-SubCell"/>
</dbReference>
<dbReference type="GO" id="GO:0004844">
    <property type="term" value="F:uracil DNA N-glycosylase activity"/>
    <property type="evidence" value="ECO:0007669"/>
    <property type="project" value="UniProtKB-UniRule"/>
</dbReference>
<dbReference type="GO" id="GO:0097510">
    <property type="term" value="P:base-excision repair, AP site formation via deaminated base removal"/>
    <property type="evidence" value="ECO:0007669"/>
    <property type="project" value="TreeGrafter"/>
</dbReference>
<dbReference type="CDD" id="cd10027">
    <property type="entry name" value="UDG-F1-like"/>
    <property type="match status" value="1"/>
</dbReference>
<dbReference type="FunFam" id="3.40.470.10:FF:000001">
    <property type="entry name" value="Uracil-DNA glycosylase"/>
    <property type="match status" value="1"/>
</dbReference>
<dbReference type="Gene3D" id="3.40.470.10">
    <property type="entry name" value="Uracil-DNA glycosylase-like domain"/>
    <property type="match status" value="1"/>
</dbReference>
<dbReference type="HAMAP" id="MF_00148">
    <property type="entry name" value="UDG"/>
    <property type="match status" value="1"/>
</dbReference>
<dbReference type="InterPro" id="IPR002043">
    <property type="entry name" value="UDG_fam1"/>
</dbReference>
<dbReference type="InterPro" id="IPR018085">
    <property type="entry name" value="Ura-DNA_Glyclase_AS"/>
</dbReference>
<dbReference type="InterPro" id="IPR005122">
    <property type="entry name" value="Uracil-DNA_glycosylase-like"/>
</dbReference>
<dbReference type="InterPro" id="IPR036895">
    <property type="entry name" value="Uracil-DNA_glycosylase-like_sf"/>
</dbReference>
<dbReference type="NCBIfam" id="NF003588">
    <property type="entry name" value="PRK05254.1-1"/>
    <property type="match status" value="1"/>
</dbReference>
<dbReference type="NCBIfam" id="NF003589">
    <property type="entry name" value="PRK05254.1-2"/>
    <property type="match status" value="1"/>
</dbReference>
<dbReference type="NCBIfam" id="NF003591">
    <property type="entry name" value="PRK05254.1-4"/>
    <property type="match status" value="1"/>
</dbReference>
<dbReference type="NCBIfam" id="NF003592">
    <property type="entry name" value="PRK05254.1-5"/>
    <property type="match status" value="1"/>
</dbReference>
<dbReference type="NCBIfam" id="TIGR00628">
    <property type="entry name" value="ung"/>
    <property type="match status" value="1"/>
</dbReference>
<dbReference type="PANTHER" id="PTHR11264">
    <property type="entry name" value="URACIL-DNA GLYCOSYLASE"/>
    <property type="match status" value="1"/>
</dbReference>
<dbReference type="PANTHER" id="PTHR11264:SF0">
    <property type="entry name" value="URACIL-DNA GLYCOSYLASE"/>
    <property type="match status" value="1"/>
</dbReference>
<dbReference type="Pfam" id="PF03167">
    <property type="entry name" value="UDG"/>
    <property type="match status" value="1"/>
</dbReference>
<dbReference type="SMART" id="SM00986">
    <property type="entry name" value="UDG"/>
    <property type="match status" value="1"/>
</dbReference>
<dbReference type="SMART" id="SM00987">
    <property type="entry name" value="UreE_C"/>
    <property type="match status" value="1"/>
</dbReference>
<dbReference type="SUPFAM" id="SSF52141">
    <property type="entry name" value="Uracil-DNA glycosylase-like"/>
    <property type="match status" value="1"/>
</dbReference>
<dbReference type="PROSITE" id="PS00130">
    <property type="entry name" value="U_DNA_GLYCOSYLASE"/>
    <property type="match status" value="1"/>
</dbReference>
<reference key="1">
    <citation type="journal article" date="2011" name="J. Bacteriol.">
        <title>Comparative genomics of 28 Salmonella enterica isolates: evidence for CRISPR-mediated adaptive sublineage evolution.</title>
        <authorList>
            <person name="Fricke W.F."/>
            <person name="Mammel M.K."/>
            <person name="McDermott P.F."/>
            <person name="Tartera C."/>
            <person name="White D.G."/>
            <person name="Leclerc J.E."/>
            <person name="Ravel J."/>
            <person name="Cebula T.A."/>
        </authorList>
    </citation>
    <scope>NUCLEOTIDE SEQUENCE [LARGE SCALE GENOMIC DNA]</scope>
    <source>
        <strain>CVM19633</strain>
    </source>
</reference>
<comment type="function">
    <text evidence="1">Excises uracil residues from the DNA which can arise as a result of misincorporation of dUMP residues by DNA polymerase or due to deamination of cytosine.</text>
</comment>
<comment type="catalytic activity">
    <reaction evidence="1">
        <text>Hydrolyzes single-stranded DNA or mismatched double-stranded DNA and polynucleotides, releasing free uracil.</text>
        <dbReference type="EC" id="3.2.2.27"/>
    </reaction>
</comment>
<comment type="subcellular location">
    <subcellularLocation>
        <location evidence="1">Cytoplasm</location>
    </subcellularLocation>
</comment>
<comment type="similarity">
    <text evidence="1">Belongs to the uracil-DNA glycosylase (UDG) superfamily. UNG family.</text>
</comment>
<accession>B4TS29</accession>
<protein>
    <recommendedName>
        <fullName evidence="1">Uracil-DNA glycosylase</fullName>
        <shortName evidence="1">UDG</shortName>
        <ecNumber evidence="1">3.2.2.27</ecNumber>
    </recommendedName>
</protein>
<keyword id="KW-0963">Cytoplasm</keyword>
<keyword id="KW-0227">DNA damage</keyword>
<keyword id="KW-0234">DNA repair</keyword>
<keyword id="KW-0378">Hydrolase</keyword>